<feature type="chain" id="PRO_0000270608" description="Histone-lysine N-methyltransferase, H3 lysine-79 specific">
    <location>
        <begin position="1"/>
        <end position="510"/>
    </location>
</feature>
<feature type="domain" description="DOT1" evidence="3">
    <location>
        <begin position="206"/>
        <end position="510"/>
    </location>
</feature>
<feature type="region of interest" description="Disordered" evidence="4">
    <location>
        <begin position="1"/>
        <end position="165"/>
    </location>
</feature>
<feature type="compositionally biased region" description="Polar residues" evidence="4">
    <location>
        <begin position="37"/>
        <end position="57"/>
    </location>
</feature>
<feature type="compositionally biased region" description="Low complexity" evidence="4">
    <location>
        <begin position="65"/>
        <end position="88"/>
    </location>
</feature>
<feature type="compositionally biased region" description="Low complexity" evidence="4">
    <location>
        <begin position="96"/>
        <end position="114"/>
    </location>
</feature>
<feature type="compositionally biased region" description="Acidic residues" evidence="4">
    <location>
        <begin position="120"/>
        <end position="129"/>
    </location>
</feature>
<feature type="binding site" evidence="3">
    <location>
        <begin position="331"/>
        <end position="334"/>
    </location>
    <ligand>
        <name>S-adenosyl-L-methionine</name>
        <dbReference type="ChEBI" id="CHEBI:59789"/>
    </ligand>
</feature>
<feature type="binding site" evidence="3">
    <location>
        <begin position="354"/>
        <end position="363"/>
    </location>
    <ligand>
        <name>S-adenosyl-L-methionine</name>
        <dbReference type="ChEBI" id="CHEBI:59789"/>
    </ligand>
</feature>
<feature type="binding site" evidence="3">
    <location>
        <position position="380"/>
    </location>
    <ligand>
        <name>S-adenosyl-L-methionine</name>
        <dbReference type="ChEBI" id="CHEBI:59789"/>
    </ligand>
</feature>
<feature type="binding site" evidence="3">
    <location>
        <begin position="416"/>
        <end position="417"/>
    </location>
    <ligand>
        <name>S-adenosyl-L-methionine</name>
        <dbReference type="ChEBI" id="CHEBI:59789"/>
    </ligand>
</feature>
<accession>Q2H9L1</accession>
<dbReference type="EC" id="2.1.1.360"/>
<dbReference type="EMBL" id="CH408030">
    <property type="protein sequence ID" value="EAQ91158.1"/>
    <property type="molecule type" value="Genomic_DNA"/>
</dbReference>
<dbReference type="RefSeq" id="XP_001229609.1">
    <property type="nucleotide sequence ID" value="XM_001229608.1"/>
</dbReference>
<dbReference type="SMR" id="Q2H9L1"/>
<dbReference type="STRING" id="306901.Q2H9L1"/>
<dbReference type="GeneID" id="4389504"/>
<dbReference type="VEuPathDB" id="FungiDB:CHGG_03093"/>
<dbReference type="eggNOG" id="KOG3924">
    <property type="taxonomic scope" value="Eukaryota"/>
</dbReference>
<dbReference type="HOGENOM" id="CLU_027287_2_0_1"/>
<dbReference type="InParanoid" id="Q2H9L1"/>
<dbReference type="OMA" id="VQQKNYW"/>
<dbReference type="OrthoDB" id="443402at2759"/>
<dbReference type="Proteomes" id="UP000001056">
    <property type="component" value="Unassembled WGS sequence"/>
</dbReference>
<dbReference type="GO" id="GO:0000781">
    <property type="term" value="C:chromosome, telomeric region"/>
    <property type="evidence" value="ECO:0007669"/>
    <property type="project" value="GOC"/>
</dbReference>
<dbReference type="GO" id="GO:0000786">
    <property type="term" value="C:nucleosome"/>
    <property type="evidence" value="ECO:0007669"/>
    <property type="project" value="InterPro"/>
</dbReference>
<dbReference type="GO" id="GO:0005634">
    <property type="term" value="C:nucleus"/>
    <property type="evidence" value="ECO:0007669"/>
    <property type="project" value="UniProtKB-SubCell"/>
</dbReference>
<dbReference type="GO" id="GO:0042393">
    <property type="term" value="F:histone binding"/>
    <property type="evidence" value="ECO:0007669"/>
    <property type="project" value="InterPro"/>
</dbReference>
<dbReference type="GO" id="GO:0140956">
    <property type="term" value="F:histone H3K79 trimethyltransferase activity"/>
    <property type="evidence" value="ECO:0007669"/>
    <property type="project" value="UniProtKB-EC"/>
</dbReference>
<dbReference type="GO" id="GO:0000077">
    <property type="term" value="P:DNA damage checkpoint signaling"/>
    <property type="evidence" value="ECO:0007669"/>
    <property type="project" value="InterPro"/>
</dbReference>
<dbReference type="GO" id="GO:0006281">
    <property type="term" value="P:DNA repair"/>
    <property type="evidence" value="ECO:0007669"/>
    <property type="project" value="InterPro"/>
</dbReference>
<dbReference type="GO" id="GO:0032259">
    <property type="term" value="P:methylation"/>
    <property type="evidence" value="ECO:0007669"/>
    <property type="project" value="UniProtKB-KW"/>
</dbReference>
<dbReference type="GO" id="GO:0031509">
    <property type="term" value="P:subtelomeric heterochromatin formation"/>
    <property type="evidence" value="ECO:0007669"/>
    <property type="project" value="InterPro"/>
</dbReference>
<dbReference type="CDD" id="cd02440">
    <property type="entry name" value="AdoMet_MTases"/>
    <property type="match status" value="1"/>
</dbReference>
<dbReference type="FunFam" id="3.40.50.150:FF:000033">
    <property type="entry name" value="Histone-lysine N-methyltransferase, H3 lysine-79 specific"/>
    <property type="match status" value="1"/>
</dbReference>
<dbReference type="Gene3D" id="1.10.260.170">
    <property type="match status" value="1"/>
</dbReference>
<dbReference type="Gene3D" id="3.40.50.150">
    <property type="entry name" value="Vaccinia Virus protein VP39"/>
    <property type="match status" value="1"/>
</dbReference>
<dbReference type="InterPro" id="IPR021162">
    <property type="entry name" value="Dot1"/>
</dbReference>
<dbReference type="InterPro" id="IPR025789">
    <property type="entry name" value="DOT1_dom"/>
</dbReference>
<dbReference type="InterPro" id="IPR030445">
    <property type="entry name" value="H3-K79_meTrfase"/>
</dbReference>
<dbReference type="InterPro" id="IPR029063">
    <property type="entry name" value="SAM-dependent_MTases_sf"/>
</dbReference>
<dbReference type="PANTHER" id="PTHR21451">
    <property type="entry name" value="HISTONE H3 METHYLTRANSFERASE"/>
    <property type="match status" value="1"/>
</dbReference>
<dbReference type="PANTHER" id="PTHR21451:SF0">
    <property type="entry name" value="HISTONE-LYSINE N-METHYLTRANSFERASE, H3 LYSINE-79 SPECIFIC"/>
    <property type="match status" value="1"/>
</dbReference>
<dbReference type="Pfam" id="PF08123">
    <property type="entry name" value="DOT1"/>
    <property type="match status" value="1"/>
</dbReference>
<dbReference type="PIRSF" id="PIRSF017570">
    <property type="entry name" value="Histone_H3-K79_MeTrfase"/>
    <property type="match status" value="1"/>
</dbReference>
<dbReference type="SUPFAM" id="SSF53335">
    <property type="entry name" value="S-adenosyl-L-methionine-dependent methyltransferases"/>
    <property type="match status" value="1"/>
</dbReference>
<dbReference type="PROSITE" id="PS51569">
    <property type="entry name" value="DOT1"/>
    <property type="match status" value="1"/>
</dbReference>
<evidence type="ECO:0000250" key="1"/>
<evidence type="ECO:0000250" key="2">
    <source>
        <dbReference type="UniProtKB" id="Q04089"/>
    </source>
</evidence>
<evidence type="ECO:0000255" key="3">
    <source>
        <dbReference type="PROSITE-ProRule" id="PRU00902"/>
    </source>
</evidence>
<evidence type="ECO:0000256" key="4">
    <source>
        <dbReference type="SAM" id="MobiDB-lite"/>
    </source>
</evidence>
<sequence>MSIFNQKSKFKVKTEVRKVKQAVEPTPESKKRYVGNGSASASTNGTPRASPTPSSLQVKRPRPRPGAGAASPATGPSLSSSTSASPLDLTRKRRAPAGSSSSRSPATASPAPRALSDSEPGSDDDDDDDWRDRLDPSKRRKRAHTEDPDRRLRHPRLWAGQGDEDKPGIVHAVQVASLADKCQPVMKLARDEVGVRLRYPGAKYTERYELVWGKDKIDGALDIMKVVKFVASTYLTDAEAKPFLDHNLGINRRLEKSKNTNDGEGFKAALAEYNNQLLALQTEGAIARNIDAMRGVPRELVEFILDQVYDRTVAPKVDLLAKYENGTDNVYGELLHPFISDIFDRTKLSSDMVFVDLGSGVGNVTLQAALERGCESWGCEMMENACNLAEAQKKEFTARCRMWGIAPGKVHLERGDFRKSERTLAALKRADVVLVNNQAFTSELNDHLVNIFLDLKIGCKIVSLKTFVHDNKIAENDVASSILEVEDLRYHEGYVSWTGAAGSFCISTRK</sequence>
<protein>
    <recommendedName>
        <fullName>Histone-lysine N-methyltransferase, H3 lysine-79 specific</fullName>
        <ecNumber>2.1.1.360</ecNumber>
    </recommendedName>
    <alternativeName>
        <fullName>Histone H3-K79 methyltransferase</fullName>
        <shortName>H3-K79-HMTase</shortName>
    </alternativeName>
</protein>
<organism>
    <name type="scientific">Chaetomium globosum (strain ATCC 6205 / CBS 148.51 / DSM 1962 / NBRC 6347 / NRRL 1970)</name>
    <name type="common">Soil fungus</name>
    <dbReference type="NCBI Taxonomy" id="306901"/>
    <lineage>
        <taxon>Eukaryota</taxon>
        <taxon>Fungi</taxon>
        <taxon>Dikarya</taxon>
        <taxon>Ascomycota</taxon>
        <taxon>Pezizomycotina</taxon>
        <taxon>Sordariomycetes</taxon>
        <taxon>Sordariomycetidae</taxon>
        <taxon>Sordariales</taxon>
        <taxon>Chaetomiaceae</taxon>
        <taxon>Chaetomium</taxon>
    </lineage>
</organism>
<comment type="function">
    <text evidence="2">Histone methyltransferase that specifically trimethylates histone H3 to form H3K79me3. This methylation is required for telomere silencing and for the pachytene checkpoint during the meiotic cell cycle by allowing the recruitment of RAD9 to double strand breaks. Nucleosomes are preferred as substrate compared to free histone.</text>
</comment>
<comment type="catalytic activity">
    <reaction evidence="2 3">
        <text>L-lysyl(79)-[histone H3] + 3 S-adenosyl-L-methionine = N(6),N(6),N(6)-trimethyl-L-lysyl(79)-[histone H3] + 3 S-adenosyl-L-homocysteine + 3 H(+)</text>
        <dbReference type="Rhea" id="RHEA:60328"/>
        <dbReference type="Rhea" id="RHEA-COMP:15549"/>
        <dbReference type="Rhea" id="RHEA-COMP:15552"/>
        <dbReference type="ChEBI" id="CHEBI:15378"/>
        <dbReference type="ChEBI" id="CHEBI:29969"/>
        <dbReference type="ChEBI" id="CHEBI:57856"/>
        <dbReference type="ChEBI" id="CHEBI:59789"/>
        <dbReference type="ChEBI" id="CHEBI:61961"/>
        <dbReference type="EC" id="2.1.1.360"/>
    </reaction>
</comment>
<comment type="activity regulation">
    <text evidence="1">Ubiquitination of histone H2B to form H2BK123ub1 is required for efficient DOT1 methyltransferase activity on histone H3.</text>
</comment>
<comment type="subcellular location">
    <subcellularLocation>
        <location evidence="1">Nucleus</location>
    </subcellularLocation>
</comment>
<comment type="miscellaneous">
    <text>In contrast to other lysine histone methyltransferases, it does not contain a SET domain, suggesting the existence of another mechanism for methylation of lysine residues of histones.</text>
</comment>
<comment type="similarity">
    <text evidence="3">Belongs to the class I-like SAM-binding methyltransferase superfamily. DOT1 family.</text>
</comment>
<keyword id="KW-0156">Chromatin regulator</keyword>
<keyword id="KW-0489">Methyltransferase</keyword>
<keyword id="KW-0539">Nucleus</keyword>
<keyword id="KW-1185">Reference proteome</keyword>
<keyword id="KW-0677">Repeat</keyword>
<keyword id="KW-0949">S-adenosyl-L-methionine</keyword>
<keyword id="KW-0804">Transcription</keyword>
<keyword id="KW-0805">Transcription regulation</keyword>
<keyword id="KW-0808">Transferase</keyword>
<gene>
    <name type="primary">DOT1</name>
    <name type="ORF">CHGG_03093</name>
</gene>
<proteinExistence type="inferred from homology"/>
<reference key="1">
    <citation type="journal article" date="2015" name="Genome Announc.">
        <title>Draft genome sequence of the cellulolytic fungus Chaetomium globosum.</title>
        <authorList>
            <person name="Cuomo C.A."/>
            <person name="Untereiner W.A."/>
            <person name="Ma L.-J."/>
            <person name="Grabherr M."/>
            <person name="Birren B.W."/>
        </authorList>
    </citation>
    <scope>NUCLEOTIDE SEQUENCE [LARGE SCALE GENOMIC DNA]</scope>
    <source>
        <strain>ATCC 6205 / CBS 148.51 / DSM 1962 / NBRC 6347 / NRRL 1970</strain>
    </source>
</reference>
<name>DOT1_CHAGB</name>